<name>ARND_SHISS</name>
<gene>
    <name evidence="1" type="primary">arnD</name>
    <name type="ordered locus">SSON_2317</name>
</gene>
<feature type="chain" id="PRO_0000383547" description="Probable 4-deoxy-4-formamido-L-arabinose-phosphoundecaprenol deformylase ArnD">
    <location>
        <begin position="1"/>
        <end position="296"/>
    </location>
</feature>
<feature type="domain" description="NodB homology" evidence="1">
    <location>
        <begin position="2"/>
        <end position="260"/>
    </location>
</feature>
<evidence type="ECO:0000255" key="1">
    <source>
        <dbReference type="HAMAP-Rule" id="MF_01870"/>
    </source>
</evidence>
<proteinExistence type="inferred from homology"/>
<comment type="function">
    <text evidence="1">Catalyzes the deformylation of 4-deoxy-4-formamido-L-arabinose-phosphoundecaprenol to 4-amino-4-deoxy-L-arabinose-phosphoundecaprenol. The modified arabinose is attached to lipid A and is required for resistance to polymyxin and cationic antimicrobial peptides.</text>
</comment>
<comment type="catalytic activity">
    <reaction evidence="1">
        <text>4-deoxy-4-formamido-alpha-L-arabinopyranosyl di-trans,octa-cis-undecaprenyl phosphate + H2O = 4-amino-4-deoxy-alpha-L-arabinopyranosyl di-trans,octa-cis-undecaprenyl phosphate + formate</text>
        <dbReference type="Rhea" id="RHEA:27734"/>
        <dbReference type="ChEBI" id="CHEBI:15377"/>
        <dbReference type="ChEBI" id="CHEBI:15740"/>
        <dbReference type="ChEBI" id="CHEBI:58909"/>
        <dbReference type="ChEBI" id="CHEBI:60463"/>
        <dbReference type="EC" id="3.5.1.n3"/>
    </reaction>
</comment>
<comment type="pathway">
    <text evidence="1">Glycolipid biosynthesis; 4-amino-4-deoxy-alpha-L-arabinose undecaprenyl phosphate biosynthesis; 4-amino-4-deoxy-alpha-L-arabinose undecaprenyl phosphate from UDP-4-deoxy-4-formamido-beta-L-arabinose and undecaprenyl phosphate: step 2/2.</text>
</comment>
<comment type="pathway">
    <text evidence="1">Bacterial outer membrane biogenesis; lipopolysaccharide biosynthesis.</text>
</comment>
<comment type="similarity">
    <text evidence="1">Belongs to the polysaccharide deacetylase family. ArnD deformylase subfamily.</text>
</comment>
<protein>
    <recommendedName>
        <fullName evidence="1">Probable 4-deoxy-4-formamido-L-arabinose-phosphoundecaprenol deformylase ArnD</fullName>
        <ecNumber evidence="1">3.5.1.n3</ecNumber>
    </recommendedName>
</protein>
<reference key="1">
    <citation type="journal article" date="2005" name="Nucleic Acids Res.">
        <title>Genome dynamics and diversity of Shigella species, the etiologic agents of bacillary dysentery.</title>
        <authorList>
            <person name="Yang F."/>
            <person name="Yang J."/>
            <person name="Zhang X."/>
            <person name="Chen L."/>
            <person name="Jiang Y."/>
            <person name="Yan Y."/>
            <person name="Tang X."/>
            <person name="Wang J."/>
            <person name="Xiong Z."/>
            <person name="Dong J."/>
            <person name="Xue Y."/>
            <person name="Zhu Y."/>
            <person name="Xu X."/>
            <person name="Sun L."/>
            <person name="Chen S."/>
            <person name="Nie H."/>
            <person name="Peng J."/>
            <person name="Xu J."/>
            <person name="Wang Y."/>
            <person name="Yuan Z."/>
            <person name="Wen Y."/>
            <person name="Yao Z."/>
            <person name="Shen Y."/>
            <person name="Qiang B."/>
            <person name="Hou Y."/>
            <person name="Yu J."/>
            <person name="Jin Q."/>
        </authorList>
    </citation>
    <scope>NUCLEOTIDE SEQUENCE [LARGE SCALE GENOMIC DNA]</scope>
    <source>
        <strain>Ss046</strain>
    </source>
</reference>
<dbReference type="EC" id="3.5.1.n3" evidence="1"/>
<dbReference type="EMBL" id="CP000038">
    <property type="protein sequence ID" value="AAZ88962.1"/>
    <property type="molecule type" value="Genomic_DNA"/>
</dbReference>
<dbReference type="RefSeq" id="WP_000169728.1">
    <property type="nucleotide sequence ID" value="NC_007384.1"/>
</dbReference>
<dbReference type="SMR" id="Q3YZV0"/>
<dbReference type="GeneID" id="93774918"/>
<dbReference type="KEGG" id="ssn:SSON_2317"/>
<dbReference type="HOGENOM" id="CLU_084199_0_0_6"/>
<dbReference type="UniPathway" id="UPA00030"/>
<dbReference type="UniPathway" id="UPA00036">
    <property type="reaction ID" value="UER00496"/>
</dbReference>
<dbReference type="Proteomes" id="UP000002529">
    <property type="component" value="Chromosome"/>
</dbReference>
<dbReference type="GO" id="GO:0016020">
    <property type="term" value="C:membrane"/>
    <property type="evidence" value="ECO:0007669"/>
    <property type="project" value="GOC"/>
</dbReference>
<dbReference type="GO" id="GO:0016811">
    <property type="term" value="F:hydrolase activity, acting on carbon-nitrogen (but not peptide) bonds, in linear amides"/>
    <property type="evidence" value="ECO:0007669"/>
    <property type="project" value="UniProtKB-UniRule"/>
</dbReference>
<dbReference type="GO" id="GO:0036108">
    <property type="term" value="P:4-amino-4-deoxy-alpha-L-arabinopyranosyl undecaprenyl phosphate biosynthetic process"/>
    <property type="evidence" value="ECO:0007669"/>
    <property type="project" value="UniProtKB-UniRule"/>
</dbReference>
<dbReference type="GO" id="GO:0009245">
    <property type="term" value="P:lipid A biosynthetic process"/>
    <property type="evidence" value="ECO:0007669"/>
    <property type="project" value="UniProtKB-UniRule"/>
</dbReference>
<dbReference type="GO" id="GO:0009103">
    <property type="term" value="P:lipopolysaccharide biosynthetic process"/>
    <property type="evidence" value="ECO:0007669"/>
    <property type="project" value="UniProtKB-UniRule"/>
</dbReference>
<dbReference type="GO" id="GO:0046677">
    <property type="term" value="P:response to antibiotic"/>
    <property type="evidence" value="ECO:0007669"/>
    <property type="project" value="UniProtKB-KW"/>
</dbReference>
<dbReference type="CDD" id="cd10939">
    <property type="entry name" value="CE4_ArnD"/>
    <property type="match status" value="1"/>
</dbReference>
<dbReference type="Gene3D" id="3.20.20.370">
    <property type="entry name" value="Glycoside hydrolase/deacetylase"/>
    <property type="match status" value="1"/>
</dbReference>
<dbReference type="HAMAP" id="MF_01870">
    <property type="entry name" value="ArnD"/>
    <property type="match status" value="1"/>
</dbReference>
<dbReference type="InterPro" id="IPR023557">
    <property type="entry name" value="ArnD"/>
</dbReference>
<dbReference type="InterPro" id="IPR011330">
    <property type="entry name" value="Glyco_hydro/deAcase_b/a-brl"/>
</dbReference>
<dbReference type="InterPro" id="IPR002509">
    <property type="entry name" value="NODB_dom"/>
</dbReference>
<dbReference type="InterPro" id="IPR050248">
    <property type="entry name" value="Polysacc_deacetylase_ArnD"/>
</dbReference>
<dbReference type="NCBIfam" id="NF011923">
    <property type="entry name" value="PRK15394.1"/>
    <property type="match status" value="1"/>
</dbReference>
<dbReference type="PANTHER" id="PTHR10587:SF137">
    <property type="entry name" value="4-DEOXY-4-FORMAMIDO-L-ARABINOSE-PHOSPHOUNDECAPRENOL DEFORMYLASE ARND-RELATED"/>
    <property type="match status" value="1"/>
</dbReference>
<dbReference type="PANTHER" id="PTHR10587">
    <property type="entry name" value="GLYCOSYL TRANSFERASE-RELATED"/>
    <property type="match status" value="1"/>
</dbReference>
<dbReference type="Pfam" id="PF01522">
    <property type="entry name" value="Polysacc_deac_1"/>
    <property type="match status" value="1"/>
</dbReference>
<dbReference type="SUPFAM" id="SSF88713">
    <property type="entry name" value="Glycoside hydrolase/deacetylase"/>
    <property type="match status" value="1"/>
</dbReference>
<dbReference type="PROSITE" id="PS51677">
    <property type="entry name" value="NODB"/>
    <property type="match status" value="1"/>
</dbReference>
<sequence length="296" mass="33112">MTKVGLRIDVDTFRGTREGVPRLLEILSKHNIQASIFFSVGPDNMGRHLWRLVKPQFLWKMLRSNAASLYGWDILLAGTAWPGKEIGHANADIIREAAKHHEVGLHAWDHHAWQARSGNWDRQTMIDDIARGLRTLEEIIGQPVTCSAAAGWRADQKVIEAKEAFHLRYNSDCRGAMPFRPLLESGNPGTAQIPVTLPTWDEVIGRDVKAEDFNGWLLNRILRDKGTPVYTIHAEVEGCAYQHNFVDLLKRAAQEGVTFCPLSELLSETLPLGQVVRGNIAGREGWLGCQQIAGSR</sequence>
<organism>
    <name type="scientific">Shigella sonnei (strain Ss046)</name>
    <dbReference type="NCBI Taxonomy" id="300269"/>
    <lineage>
        <taxon>Bacteria</taxon>
        <taxon>Pseudomonadati</taxon>
        <taxon>Pseudomonadota</taxon>
        <taxon>Gammaproteobacteria</taxon>
        <taxon>Enterobacterales</taxon>
        <taxon>Enterobacteriaceae</taxon>
        <taxon>Shigella</taxon>
    </lineage>
</organism>
<accession>Q3YZV0</accession>
<keyword id="KW-0046">Antibiotic resistance</keyword>
<keyword id="KW-0378">Hydrolase</keyword>
<keyword id="KW-0441">Lipid A biosynthesis</keyword>
<keyword id="KW-0444">Lipid biosynthesis</keyword>
<keyword id="KW-0443">Lipid metabolism</keyword>
<keyword id="KW-0448">Lipopolysaccharide biosynthesis</keyword>
<keyword id="KW-1185">Reference proteome</keyword>